<feature type="chain" id="PRO_0000097637" description="Scytalone dehydratase arp1">
    <location>
        <begin position="1"/>
        <end position="168"/>
    </location>
</feature>
<feature type="active site" evidence="1">
    <location>
        <position position="84"/>
    </location>
</feature>
<feature type="active site" evidence="1">
    <location>
        <position position="109"/>
    </location>
</feature>
<feature type="binding site" evidence="1">
    <location>
        <position position="29"/>
    </location>
    <ligand>
        <name>substrate</name>
    </ligand>
</feature>
<feature type="binding site" evidence="1">
    <location>
        <position position="49"/>
    </location>
    <ligand>
        <name>substrate</name>
    </ligand>
</feature>
<feature type="binding site" evidence="1">
    <location>
        <position position="130"/>
    </location>
    <ligand>
        <name>substrate</name>
    </ligand>
</feature>
<evidence type="ECO:0000250" key="1">
    <source>
        <dbReference type="UniProtKB" id="P56221"/>
    </source>
</evidence>
<evidence type="ECO:0000269" key="2">
    <source>
    </source>
</evidence>
<evidence type="ECO:0000269" key="3">
    <source>
    </source>
</evidence>
<evidence type="ECO:0000269" key="4">
    <source>
    </source>
</evidence>
<evidence type="ECO:0000269" key="5">
    <source>
    </source>
</evidence>
<evidence type="ECO:0000269" key="6">
    <source>
    </source>
</evidence>
<evidence type="ECO:0000269" key="7">
    <source>
    </source>
</evidence>
<evidence type="ECO:0000269" key="8">
    <source>
    </source>
</evidence>
<evidence type="ECO:0000269" key="9">
    <source>
    </source>
</evidence>
<evidence type="ECO:0000269" key="10">
    <source>
    </source>
</evidence>
<evidence type="ECO:0000269" key="11">
    <source>
    </source>
</evidence>
<evidence type="ECO:0000303" key="12">
    <source>
    </source>
</evidence>
<evidence type="ECO:0000305" key="13"/>
<evidence type="ECO:0000305" key="14">
    <source>
    </source>
</evidence>
<evidence type="ECO:0000305" key="15">
    <source>
    </source>
</evidence>
<dbReference type="EC" id="4.2.1.94" evidence="14"/>
<dbReference type="EMBL" id="U95042">
    <property type="protein sequence ID" value="AAC49843.1"/>
    <property type="molecule type" value="Genomic_DNA"/>
</dbReference>
<dbReference type="EMBL" id="AAHF01000001">
    <property type="protein sequence ID" value="EAL94055.1"/>
    <property type="molecule type" value="Genomic_DNA"/>
</dbReference>
<dbReference type="RefSeq" id="XP_756093.1">
    <property type="nucleotide sequence ID" value="XM_751000.1"/>
</dbReference>
<dbReference type="SMR" id="O14434"/>
<dbReference type="STRING" id="330879.O14434"/>
<dbReference type="EnsemblFungi" id="EAL94055">
    <property type="protein sequence ID" value="EAL94055"/>
    <property type="gene ID" value="AFUA_2G17580"/>
</dbReference>
<dbReference type="GeneID" id="3513289"/>
<dbReference type="KEGG" id="afm:AFUA_2G17580"/>
<dbReference type="VEuPathDB" id="FungiDB:Afu2g17580"/>
<dbReference type="eggNOG" id="ENOG502SNND">
    <property type="taxonomic scope" value="Eukaryota"/>
</dbReference>
<dbReference type="HOGENOM" id="CLU_101889_1_0_1"/>
<dbReference type="InParanoid" id="O14434"/>
<dbReference type="OMA" id="TVRWNEY"/>
<dbReference type="OrthoDB" id="5281072at2759"/>
<dbReference type="UniPathway" id="UPA00785"/>
<dbReference type="Proteomes" id="UP000002530">
    <property type="component" value="Chromosome 2"/>
</dbReference>
<dbReference type="GO" id="GO:0005768">
    <property type="term" value="C:endosome"/>
    <property type="evidence" value="ECO:0007669"/>
    <property type="project" value="UniProtKB-SubCell"/>
</dbReference>
<dbReference type="GO" id="GO:0030411">
    <property type="term" value="F:scytalone dehydratase activity"/>
    <property type="evidence" value="ECO:0000315"/>
    <property type="project" value="AspGD"/>
</dbReference>
<dbReference type="GO" id="GO:0048315">
    <property type="term" value="P:conidium formation"/>
    <property type="evidence" value="ECO:0007669"/>
    <property type="project" value="UniProtKB-KW"/>
</dbReference>
<dbReference type="GO" id="GO:0042438">
    <property type="term" value="P:melanin biosynthetic process"/>
    <property type="evidence" value="ECO:0000315"/>
    <property type="project" value="AspGD"/>
</dbReference>
<dbReference type="GO" id="GO:0046148">
    <property type="term" value="P:pigment biosynthetic process"/>
    <property type="evidence" value="ECO:0000315"/>
    <property type="project" value="AspGD"/>
</dbReference>
<dbReference type="GO" id="GO:0030435">
    <property type="term" value="P:sporulation resulting in formation of a cellular spore"/>
    <property type="evidence" value="ECO:0007669"/>
    <property type="project" value="UniProtKB-KW"/>
</dbReference>
<dbReference type="CDD" id="cd00531">
    <property type="entry name" value="NTF2_like"/>
    <property type="match status" value="1"/>
</dbReference>
<dbReference type="FunFam" id="3.10.450.50:FF:000030">
    <property type="entry name" value="Conidial pigment biosynthesis scytalone dehydratase Arp1"/>
    <property type="match status" value="1"/>
</dbReference>
<dbReference type="Gene3D" id="3.10.450.50">
    <property type="match status" value="1"/>
</dbReference>
<dbReference type="InterPro" id="IPR032710">
    <property type="entry name" value="NTF2-like_dom_sf"/>
</dbReference>
<dbReference type="InterPro" id="IPR004235">
    <property type="entry name" value="Scytalone_dehydratase"/>
</dbReference>
<dbReference type="InterPro" id="IPR049884">
    <property type="entry name" value="Scytalone_dh"/>
</dbReference>
<dbReference type="Pfam" id="PF02982">
    <property type="entry name" value="Scytalone_dh"/>
    <property type="match status" value="1"/>
</dbReference>
<dbReference type="PIRSF" id="PIRSF024851">
    <property type="entry name" value="SCD1"/>
    <property type="match status" value="1"/>
</dbReference>
<dbReference type="SUPFAM" id="SSF54427">
    <property type="entry name" value="NTF2-like"/>
    <property type="match status" value="1"/>
</dbReference>
<comment type="function">
    <text evidence="2 3 4 5 6 7 8 9 10">Scytalone dehydratase; part of the gene cluster that mediates the biosynthesis of dihydroxynaphthalene (DHN)-melanin, a bluish-green pigment and a structural component of the conidial wall (PubMed:10515939, PubMed:19156203). The first step of the pathway is the production of the heptaketide naphtopyrone YWA1 by the polyketide synthase alb1 though condensation of acetyl-CoA with malonyl-CoA (PubMed:10515939). The naphtopyrone YWA1 is then converted to the pentaketide 1,3,6,8-tetrahydroxynaphthalene (1,3,6,8-THN) by the heptaketide hydrolyase ayg1 though chain-length shortening (PubMed:10515939). 1,3,6,8-THN is substrate of the hydroxynaphthalene reductase arp2 to yield scytalone (PubMed:10515939). The scytalone dehydratase arp1 then reduces scytalone to 1,3,8-THN (PubMed:10515939). 1,3,8-THN is also substrate of the hydroxynaphthalene reductase arp2 to yield vermelone (PubMed:10515939). Vermelone is further converted by the multicopper oxidase abr1 to 1,8-DHN (PubMed:10515939). Finally the laccase abr2 transforms 1,8-DHN to DHN-melanin (PubMed:10515939). DHN-melanin biosynthesis appears to be initiated in endosomes where early enzymes (abl1, ayg1, arp1 and arp2) localize, with exocytosis leading to melanin deposition on the cell surface where late enzymes (abr1 and abr2) localize (PubMed:26972005). DHN-melanin is an important structural component of the outer cell wall and is required for the presence of conidial surface hydrophobins (PubMed:19703288). DHN-melanin also plays a crucial role in fungal virulence, including a protective role against the host's immune defenses (PubMed:19156203, PubMed:20145078, PubMed:21573171, PubMed:21747802, PubMed:24818666). DHN-melanin also protects conidia against amoeba predation (PubMed:25684622).</text>
</comment>
<comment type="catalytic activity">
    <reaction evidence="15">
        <text>scytalone = 1,3,8-trihydroxynaphthalene + H2O</text>
        <dbReference type="Rhea" id="RHEA:24396"/>
        <dbReference type="ChEBI" id="CHEBI:15377"/>
        <dbReference type="ChEBI" id="CHEBI:16945"/>
        <dbReference type="ChEBI" id="CHEBI:18393"/>
        <dbReference type="EC" id="4.2.1.94"/>
    </reaction>
</comment>
<comment type="activity regulation">
    <text evidence="4">Fenoxanil inhibits arp1 scytalone dehydratase activity (PubMed:19703288).</text>
</comment>
<comment type="pathway">
    <text evidence="2 3 11">Pigment biosynthesis; melanin biosynthesis.</text>
</comment>
<comment type="subunit">
    <text evidence="1">Homotrimer (By similarity). Each subunit contains an active site, located in the central part of the hydrophobic core of the monomer, which functions independently (By similarity).</text>
</comment>
<comment type="subcellular location">
    <subcellularLocation>
        <location evidence="10">Endosome</location>
    </subcellularLocation>
</comment>
<comment type="developmental stage">
    <text evidence="11">Expressed during conidiation.</text>
</comment>
<comment type="disruption phenotype">
    <text evidence="3 10 11">Impairs the production of dihydroxynaphthalene (DHN)-melanin and results in reddish-pink conidial phenotype (PubMed:26972005, PubMed:9383199). Up-regulates complement component C3 deposition on conidial surfaces (PubMed:9383199). Causes enhanced insect mortality compared to the parent strain in a wax moth Galleria mellonella infection model, probably through exacerbated immune response of the wax moth (PubMed:19156203).</text>
</comment>
<comment type="similarity">
    <text evidence="13">Belongs to the scytalone dehydratase family.</text>
</comment>
<keyword id="KW-0183">Conidiation</keyword>
<keyword id="KW-0967">Endosome</keyword>
<keyword id="KW-0456">Lyase</keyword>
<keyword id="KW-1185">Reference proteome</keyword>
<keyword id="KW-0749">Sporulation</keyword>
<reference key="1">
    <citation type="journal article" date="1997" name="Mol. Microbiol.">
        <title>Aspergillus fumigatus arp1 modulates conidial pigmentation and complement deposition.</title>
        <authorList>
            <person name="Tsai H.-F."/>
            <person name="Washburn R.G."/>
            <person name="Chang Y.C."/>
            <person name="Kwon-Chung K.J."/>
        </authorList>
    </citation>
    <scope>NUCLEOTIDE SEQUENCE [GENOMIC DNA]</scope>
    <scope>FUNCTION</scope>
    <scope>DISRUPTION PHENOTYPE</scope>
    <scope>TISSUE SPECIFICITY</scope>
    <source>
        <strain>B-5233</strain>
    </source>
</reference>
<reference key="2">
    <citation type="journal article" date="2005" name="Nature">
        <title>Genomic sequence of the pathogenic and allergenic filamentous fungus Aspergillus fumigatus.</title>
        <authorList>
            <person name="Nierman W.C."/>
            <person name="Pain A."/>
            <person name="Anderson M.J."/>
            <person name="Wortman J.R."/>
            <person name="Kim H.S."/>
            <person name="Arroyo J."/>
            <person name="Berriman M."/>
            <person name="Abe K."/>
            <person name="Archer D.B."/>
            <person name="Bermejo C."/>
            <person name="Bennett J.W."/>
            <person name="Bowyer P."/>
            <person name="Chen D."/>
            <person name="Collins M."/>
            <person name="Coulsen R."/>
            <person name="Davies R."/>
            <person name="Dyer P.S."/>
            <person name="Farman M.L."/>
            <person name="Fedorova N."/>
            <person name="Fedorova N.D."/>
            <person name="Feldblyum T.V."/>
            <person name="Fischer R."/>
            <person name="Fosker N."/>
            <person name="Fraser A."/>
            <person name="Garcia J.L."/>
            <person name="Garcia M.J."/>
            <person name="Goble A."/>
            <person name="Goldman G.H."/>
            <person name="Gomi K."/>
            <person name="Griffith-Jones S."/>
            <person name="Gwilliam R."/>
            <person name="Haas B.J."/>
            <person name="Haas H."/>
            <person name="Harris D.E."/>
            <person name="Horiuchi H."/>
            <person name="Huang J."/>
            <person name="Humphray S."/>
            <person name="Jimenez J."/>
            <person name="Keller N."/>
            <person name="Khouri H."/>
            <person name="Kitamoto K."/>
            <person name="Kobayashi T."/>
            <person name="Konzack S."/>
            <person name="Kulkarni R."/>
            <person name="Kumagai T."/>
            <person name="Lafton A."/>
            <person name="Latge J.-P."/>
            <person name="Li W."/>
            <person name="Lord A."/>
            <person name="Lu C."/>
            <person name="Majoros W.H."/>
            <person name="May G.S."/>
            <person name="Miller B.L."/>
            <person name="Mohamoud Y."/>
            <person name="Molina M."/>
            <person name="Monod M."/>
            <person name="Mouyna I."/>
            <person name="Mulligan S."/>
            <person name="Murphy L.D."/>
            <person name="O'Neil S."/>
            <person name="Paulsen I."/>
            <person name="Penalva M.A."/>
            <person name="Pertea M."/>
            <person name="Price C."/>
            <person name="Pritchard B.L."/>
            <person name="Quail M.A."/>
            <person name="Rabbinowitsch E."/>
            <person name="Rawlins N."/>
            <person name="Rajandream M.A."/>
            <person name="Reichard U."/>
            <person name="Renauld H."/>
            <person name="Robson G.D."/>
            <person name="Rodriguez de Cordoba S."/>
            <person name="Rodriguez-Pena J.M."/>
            <person name="Ronning C.M."/>
            <person name="Rutter S."/>
            <person name="Salzberg S.L."/>
            <person name="Sanchez M."/>
            <person name="Sanchez-Ferrero J.C."/>
            <person name="Saunders D."/>
            <person name="Seeger K."/>
            <person name="Squares R."/>
            <person name="Squares S."/>
            <person name="Takeuchi M."/>
            <person name="Tekaia F."/>
            <person name="Turner G."/>
            <person name="Vazquez de Aldana C.R."/>
            <person name="Weidman J."/>
            <person name="White O."/>
            <person name="Woodward J.R."/>
            <person name="Yu J.-H."/>
            <person name="Fraser C.M."/>
            <person name="Galagan J.E."/>
            <person name="Asai K."/>
            <person name="Machida M."/>
            <person name="Hall N."/>
            <person name="Barrell B.G."/>
            <person name="Denning D.W."/>
        </authorList>
    </citation>
    <scope>NUCLEOTIDE SEQUENCE [LARGE SCALE GENOMIC DNA]</scope>
    <source>
        <strain>ATCC MYA-4609 / CBS 101355 / FGSC A1100 / Af293</strain>
    </source>
</reference>
<reference key="3">
    <citation type="journal article" date="1999" name="J. Bacteriol.">
        <title>A developmentally regulated gene cluster involved in conidial pigment biosynthesis in Aspergillus fumigatus.</title>
        <authorList>
            <person name="Tsai H.F."/>
            <person name="Wheeler M.H."/>
            <person name="Chang Y.C."/>
            <person name="Kwon-Chung K.J."/>
        </authorList>
    </citation>
    <scope>FUNCTION</scope>
</reference>
<reference key="4">
    <citation type="journal article" date="2009" name="BMC Microbiol.">
        <title>Melanin is an essential component for the integrity of the cell wall of Aspergillus fumigatus conidia.</title>
        <authorList>
            <person name="Pihet M."/>
            <person name="Vandeputte P."/>
            <person name="Tronchin G."/>
            <person name="Renier G."/>
            <person name="Saulnier P."/>
            <person name="Georgeault S."/>
            <person name="Mallet R."/>
            <person name="Chabasse D."/>
            <person name="Symoens F."/>
            <person name="Bouchara J.P."/>
        </authorList>
    </citation>
    <scope>FUNCTION</scope>
    <scope>ACTIVITY REGULATION</scope>
</reference>
<reference key="5">
    <citation type="journal article" date="2009" name="PLoS ONE">
        <title>Conidiation color mutants of Aspergillus fumigatus are highly pathogenic to the heterologous insect host Galleria mellonella.</title>
        <authorList>
            <person name="Jackson J.C."/>
            <person name="Higgins L.A."/>
            <person name="Lin X."/>
        </authorList>
    </citation>
    <scope>FUNCTION</scope>
    <scope>DISRUPTION PHENOTYPE</scope>
</reference>
<reference key="6">
    <citation type="journal article" date="2010" name="Antimicrob. Agents Chemother.">
        <title>Cutaneous model of invasive aspergillosis.</title>
        <authorList>
            <person name="Ben-Ami R."/>
            <person name="Lewis R.E."/>
            <person name="Leventakos K."/>
            <person name="Latge J.P."/>
            <person name="Kontoyiannis D.P."/>
        </authorList>
    </citation>
    <scope>FUNCTION</scope>
</reference>
<reference key="7">
    <citation type="journal article" date="2011" name="Front. Microbiol.">
        <title>Conidial dihydroxynaphthalene melanin of the human pathogenic fungus Aspergillus fumigatus interferes with the host endocytosis pathway.</title>
        <authorList>
            <person name="Thywissen A."/>
            <person name="Heinekamp T."/>
            <person name="Dahse H.M."/>
            <person name="Schmaler-Ripcke J."/>
            <person name="Nietzsche S."/>
            <person name="Zipfel P.F."/>
            <person name="Brakhage A.A."/>
        </authorList>
    </citation>
    <scope>FUNCTION</scope>
</reference>
<reference key="8">
    <citation type="journal article" date="2011" name="PLoS ONE">
        <title>Automated image analysis of the host-pathogen interaction between phagocytes and Aspergillus fumigatus.</title>
        <authorList>
            <person name="Mech F."/>
            <person name="Thywissen A."/>
            <person name="Guthke R."/>
            <person name="Brakhage A.A."/>
            <person name="Figge M.T."/>
        </authorList>
    </citation>
    <scope>FUNCTION</scope>
</reference>
<reference key="9">
    <citation type="journal article" date="2014" name="Infect. Immun.">
        <title>Surface structure characterization of Aspergillus fumigatus conidia mutated in the melanin synthesis pathway and their human cellular immune response.</title>
        <authorList>
            <person name="Bayry J."/>
            <person name="Beaussart A."/>
            <person name="Dufrene Y.F."/>
            <person name="Sharma M."/>
            <person name="Bansal K."/>
            <person name="Kniemeyer O."/>
            <person name="Aimanianda V."/>
            <person name="Brakhage A.A."/>
            <person name="Kaveri S.V."/>
            <person name="Kwon-Chung K.J."/>
            <person name="Latge J.P."/>
            <person name="Beauvais A."/>
        </authorList>
    </citation>
    <scope>FUNCTION</scope>
</reference>
<reference key="10">
    <citation type="journal article" date="2015" name="Environ. Microbiol.">
        <title>Virulence determinants of the human pathogenic fungus Aspergillus fumigatus protect against soil amoeba predation.</title>
        <authorList>
            <person name="Hillmann F."/>
            <person name="Novohradska S."/>
            <person name="Mattern D.J."/>
            <person name="Forberger T."/>
            <person name="Heinekamp T."/>
            <person name="Westermann M."/>
            <person name="Winckler T."/>
            <person name="Brakhage A.A."/>
        </authorList>
    </citation>
    <scope>FUNCTION</scope>
</reference>
<reference key="11">
    <citation type="journal article" date="2016" name="Cell Rep.">
        <title>Subcellular compartmentalization and trafficking of the biosynthetic machinery for fungal melanin.</title>
        <authorList>
            <person name="Upadhyay S."/>
            <person name="Xu X."/>
            <person name="Lowry D."/>
            <person name="Jackson J.C."/>
            <person name="Roberson R.W."/>
            <person name="Lin X."/>
        </authorList>
    </citation>
    <scope>SUBCELLULAR LOCATION</scope>
    <scope>FUNCTION</scope>
    <scope>DISRUPTION PHENOTYPE</scope>
</reference>
<gene>
    <name evidence="12" type="primary">arp1</name>
    <name type="ORF">AFUA_2G17580</name>
</gene>
<name>ARP1_ASPFU</name>
<protein>
    <recommendedName>
        <fullName evidence="14">Scytalone dehydratase arp1</fullName>
        <ecNumber evidence="14">4.2.1.94</ecNumber>
    </recommendedName>
    <alternativeName>
        <fullName evidence="13">Conidial pigment biosynthesis oxidase arp1</fullName>
    </alternativeName>
</protein>
<proteinExistence type="evidence at transcript level"/>
<sequence>MVEKKPNLTLEFHDYLALKKVLFDWADSYDAKDWDRLRSIIAPTLTVDYRQIGLRKWDDMPAEDYMAMISDMDFLGDPTVKTQHLLGESWWEKISDTEVIGHHQLRAAHQVYTDSTLQTVKLKGHGHATNEHYYRKVDGVWKFAGLKPTVRWNEYQFEDVFRAAKPSV</sequence>
<accession>O14434</accession>
<accession>Q4WZB0</accession>
<organism>
    <name type="scientific">Aspergillus fumigatus (strain ATCC MYA-4609 / CBS 101355 / FGSC A1100 / Af293)</name>
    <name type="common">Neosartorya fumigata</name>
    <dbReference type="NCBI Taxonomy" id="330879"/>
    <lineage>
        <taxon>Eukaryota</taxon>
        <taxon>Fungi</taxon>
        <taxon>Dikarya</taxon>
        <taxon>Ascomycota</taxon>
        <taxon>Pezizomycotina</taxon>
        <taxon>Eurotiomycetes</taxon>
        <taxon>Eurotiomycetidae</taxon>
        <taxon>Eurotiales</taxon>
        <taxon>Aspergillaceae</taxon>
        <taxon>Aspergillus</taxon>
        <taxon>Aspergillus subgen. Fumigati</taxon>
    </lineage>
</organism>